<dbReference type="EC" id="3.1.-.-" evidence="1"/>
<dbReference type="EC" id="5.6.2.4" evidence="1"/>
<dbReference type="EMBL" id="AM295007">
    <property type="protein sequence ID" value="CAM30537.1"/>
    <property type="molecule type" value="Genomic_DNA"/>
</dbReference>
<dbReference type="RefSeq" id="WP_011889017.1">
    <property type="nucleotide sequence ID" value="NC_009332.1"/>
</dbReference>
<dbReference type="SMR" id="A2RFA8"/>
<dbReference type="KEGG" id="spf:SpyM51212"/>
<dbReference type="HOGENOM" id="CLU_001114_3_1_9"/>
<dbReference type="GO" id="GO:0005829">
    <property type="term" value="C:cytosol"/>
    <property type="evidence" value="ECO:0007669"/>
    <property type="project" value="TreeGrafter"/>
</dbReference>
<dbReference type="GO" id="GO:0033202">
    <property type="term" value="C:DNA helicase complex"/>
    <property type="evidence" value="ECO:0007669"/>
    <property type="project" value="TreeGrafter"/>
</dbReference>
<dbReference type="GO" id="GO:0043138">
    <property type="term" value="F:3'-5' DNA helicase activity"/>
    <property type="evidence" value="ECO:0007669"/>
    <property type="project" value="UniProtKB-UniRule"/>
</dbReference>
<dbReference type="GO" id="GO:0008408">
    <property type="term" value="F:3'-5' exonuclease activity"/>
    <property type="evidence" value="ECO:0007669"/>
    <property type="project" value="UniProtKB-UniRule"/>
</dbReference>
<dbReference type="GO" id="GO:0005524">
    <property type="term" value="F:ATP binding"/>
    <property type="evidence" value="ECO:0007669"/>
    <property type="project" value="UniProtKB-UniRule"/>
</dbReference>
<dbReference type="GO" id="GO:0016887">
    <property type="term" value="F:ATP hydrolysis activity"/>
    <property type="evidence" value="ECO:0007669"/>
    <property type="project" value="RHEA"/>
</dbReference>
<dbReference type="GO" id="GO:0003690">
    <property type="term" value="F:double-stranded DNA binding"/>
    <property type="evidence" value="ECO:0007669"/>
    <property type="project" value="UniProtKB-UniRule"/>
</dbReference>
<dbReference type="GO" id="GO:0000724">
    <property type="term" value="P:double-strand break repair via homologous recombination"/>
    <property type="evidence" value="ECO:0007669"/>
    <property type="project" value="UniProtKB-UniRule"/>
</dbReference>
<dbReference type="CDD" id="cd17932">
    <property type="entry name" value="DEXQc_UvrD"/>
    <property type="match status" value="1"/>
</dbReference>
<dbReference type="Gene3D" id="3.90.320.10">
    <property type="match status" value="1"/>
</dbReference>
<dbReference type="Gene3D" id="3.40.50.300">
    <property type="entry name" value="P-loop containing nucleotide triphosphate hydrolases"/>
    <property type="match status" value="4"/>
</dbReference>
<dbReference type="Gene3D" id="1.10.486.10">
    <property type="entry name" value="PCRA, domain 4"/>
    <property type="match status" value="1"/>
</dbReference>
<dbReference type="HAMAP" id="MF_01451">
    <property type="entry name" value="AddA"/>
    <property type="match status" value="1"/>
</dbReference>
<dbReference type="InterPro" id="IPR014152">
    <property type="entry name" value="AddA"/>
</dbReference>
<dbReference type="InterPro" id="IPR014017">
    <property type="entry name" value="DNA_helicase_UvrD-like_C"/>
</dbReference>
<dbReference type="InterPro" id="IPR000212">
    <property type="entry name" value="DNA_helicase_UvrD/REP"/>
</dbReference>
<dbReference type="InterPro" id="IPR027417">
    <property type="entry name" value="P-loop_NTPase"/>
</dbReference>
<dbReference type="InterPro" id="IPR011604">
    <property type="entry name" value="PDDEXK-like_dom_sf"/>
</dbReference>
<dbReference type="InterPro" id="IPR038726">
    <property type="entry name" value="PDDEXK_AddAB-type"/>
</dbReference>
<dbReference type="InterPro" id="IPR011335">
    <property type="entry name" value="Restrct_endonuc-II-like"/>
</dbReference>
<dbReference type="InterPro" id="IPR014016">
    <property type="entry name" value="UvrD-like_ATP-bd"/>
</dbReference>
<dbReference type="NCBIfam" id="TIGR02785">
    <property type="entry name" value="addA_Gpos"/>
    <property type="match status" value="1"/>
</dbReference>
<dbReference type="PANTHER" id="PTHR11070:SF48">
    <property type="entry name" value="ATP-DEPENDENT HELICASE_NUCLEASE SUBUNIT A"/>
    <property type="match status" value="1"/>
</dbReference>
<dbReference type="PANTHER" id="PTHR11070">
    <property type="entry name" value="UVRD / RECB / PCRA DNA HELICASE FAMILY MEMBER"/>
    <property type="match status" value="1"/>
</dbReference>
<dbReference type="Pfam" id="PF12705">
    <property type="entry name" value="PDDEXK_1"/>
    <property type="match status" value="1"/>
</dbReference>
<dbReference type="Pfam" id="PF00580">
    <property type="entry name" value="UvrD-helicase"/>
    <property type="match status" value="1"/>
</dbReference>
<dbReference type="Pfam" id="PF13361">
    <property type="entry name" value="UvrD_C"/>
    <property type="match status" value="1"/>
</dbReference>
<dbReference type="SUPFAM" id="SSF52540">
    <property type="entry name" value="P-loop containing nucleoside triphosphate hydrolases"/>
    <property type="match status" value="1"/>
</dbReference>
<dbReference type="SUPFAM" id="SSF52980">
    <property type="entry name" value="Restriction endonuclease-like"/>
    <property type="match status" value="1"/>
</dbReference>
<dbReference type="PROSITE" id="PS51198">
    <property type="entry name" value="UVRD_HELICASE_ATP_BIND"/>
    <property type="match status" value="1"/>
</dbReference>
<dbReference type="PROSITE" id="PS51217">
    <property type="entry name" value="UVRD_HELICASE_CTER"/>
    <property type="match status" value="1"/>
</dbReference>
<keyword id="KW-0067">ATP-binding</keyword>
<keyword id="KW-0227">DNA damage</keyword>
<keyword id="KW-0234">DNA repair</keyword>
<keyword id="KW-0238">DNA-binding</keyword>
<keyword id="KW-0269">Exonuclease</keyword>
<keyword id="KW-0347">Helicase</keyword>
<keyword id="KW-0378">Hydrolase</keyword>
<keyword id="KW-0413">Isomerase</keyword>
<keyword id="KW-0540">Nuclease</keyword>
<keyword id="KW-0547">Nucleotide-binding</keyword>
<feature type="chain" id="PRO_0000379349" description="ATP-dependent helicase/nuclease subunit A">
    <location>
        <begin position="1"/>
        <end position="1210"/>
    </location>
</feature>
<feature type="domain" description="UvrD-like helicase ATP-binding" evidence="1">
    <location>
        <begin position="27"/>
        <end position="483"/>
    </location>
</feature>
<feature type="domain" description="UvrD-like helicase C-terminal" evidence="1">
    <location>
        <begin position="512"/>
        <end position="798"/>
    </location>
</feature>
<feature type="binding site" evidence="1">
    <location>
        <begin position="48"/>
        <end position="55"/>
    </location>
    <ligand>
        <name>ATP</name>
        <dbReference type="ChEBI" id="CHEBI:30616"/>
    </ligand>
</feature>
<sequence>MISFAPFLSPEAIKHLQENERYSDQSQKRTAQQIEAIYTSGQNILVSASAGSGKTFVMVERILDKILRGVSIDRLFISTFTVKAATELRERIENKLYSQIAQTTDFQMKVYLTEQLQSLCQADIGTMDAFAQKVVSRYGYSIGISSQFRIMQDKAEQDVLKQEVFSKLFSEFMNQKEAPVFRALVKNFSGNCKDTSAFRELVYTCYSFSQSTENPKIWLQENFLSAAKTYQRLEDIPDHDIELLLLAMQDTANQLRDVTDMEDYGQLTKAGSRSAKYTKHLTIIEKLSDWVRDFKCLYGKAGLDRLIRDVTDLIPSGNDVTVSKVKYPVFKTLHQKLKQFRHLETILMYQKDCFPLLEQLQDFVLVFSEAYLAVKIQESAFEFSDIAHFAIKILEENTDIRQSYQQHYHEVMVDEYQDNNHMQERLLTLLSNGHNRFMVGDIKQSIYRFRQADPQIFNQKFRDYQKKPEQGKVILLKENFRSQSEVLNVSNAVFSHLMDESVGDVSYDEQHQLIAGSHAQTVPYLDRRAQLLLYNSDKDDGNAPSDSEGISFSEVTIVAKEIIKLHNDKGVPFEDITLLVSSRTRNDIISHTFNQYGIPIVTDGGQQNYLKSVEVMVMLDTLRTINNPRNDYALVALLRSPMFAFDEDDLARIALQKDNELDKDCLYDKIQRAVIGRGAHPELIHDTLLGKLNVFLKTLKSWRRYAKLGSLYDLIWKIFNDRFYFDFVASQAKAEQAQANLYALALRANQFEKSGYKGLYRFIKMIDKVLETQNDLADVEVAAPKQAVNLMTIHKSKGLQFPYVFILNCDKRFSMTDIHKSFILNRQHGIGIKYLADIKGLLGETTLNSVKVSMETLPYQLNKQELRLATLSEQMRLLYVAMTRAEKKVYFIGKASKSKSQDITDPKKLGKLLPLALREQLLTFQDWLLAIADIFSTEDLYFDVRFIEDSDLTQESVGRLQTPQLLNPDDLKDNRQSETIARALDMLEAVSQLNANYEAAIHLPTVRTPSQLKATYEPLLEPIGVDIIEKSSRSLSDFTLPHFSKKAKVEASHIGSALHQLMQVLPLSKPINQQTLLDALRGIDSNEEVKTALDLKKIESFFCDTSLGQFFQTYQKHLYREAPFAILKLDPISQEEYVLRGIIDAYFLFDDHIVLVDYKTDKYKQPIELKKRYQQQLELYAEALTQTYKLPVTKRYLVLMGGGKPEIVEV</sequence>
<comment type="function">
    <text evidence="1">The heterodimer acts as both an ATP-dependent DNA helicase and an ATP-dependent, dual-direction single-stranded exonuclease. Recognizes the chi site generating a DNA molecule suitable for the initiation of homologous recombination. The AddA nuclease domain is required for chi fragment generation; this subunit has the helicase and 3' -&gt; 5' nuclease activities.</text>
</comment>
<comment type="catalytic activity">
    <reaction evidence="1">
        <text>Couples ATP hydrolysis with the unwinding of duplex DNA by translocating in the 3'-5' direction.</text>
        <dbReference type="EC" id="5.6.2.4"/>
    </reaction>
</comment>
<comment type="catalytic activity">
    <reaction evidence="1">
        <text>ATP + H2O = ADP + phosphate + H(+)</text>
        <dbReference type="Rhea" id="RHEA:13065"/>
        <dbReference type="ChEBI" id="CHEBI:15377"/>
        <dbReference type="ChEBI" id="CHEBI:15378"/>
        <dbReference type="ChEBI" id="CHEBI:30616"/>
        <dbReference type="ChEBI" id="CHEBI:43474"/>
        <dbReference type="ChEBI" id="CHEBI:456216"/>
        <dbReference type="EC" id="5.6.2.4"/>
    </reaction>
</comment>
<comment type="cofactor">
    <cofactor evidence="1">
        <name>Mg(2+)</name>
        <dbReference type="ChEBI" id="CHEBI:18420"/>
    </cofactor>
</comment>
<comment type="subunit">
    <text evidence="1">Heterodimer of AddA and AddB/RexB.</text>
</comment>
<comment type="similarity">
    <text evidence="1">Belongs to the helicase family. AddA subfamily.</text>
</comment>
<organism>
    <name type="scientific">Streptococcus pyogenes serotype M5 (strain Manfredo)</name>
    <dbReference type="NCBI Taxonomy" id="160491"/>
    <lineage>
        <taxon>Bacteria</taxon>
        <taxon>Bacillati</taxon>
        <taxon>Bacillota</taxon>
        <taxon>Bacilli</taxon>
        <taxon>Lactobacillales</taxon>
        <taxon>Streptococcaceae</taxon>
        <taxon>Streptococcus</taxon>
    </lineage>
</organism>
<evidence type="ECO:0000255" key="1">
    <source>
        <dbReference type="HAMAP-Rule" id="MF_01451"/>
    </source>
</evidence>
<reference key="1">
    <citation type="journal article" date="2007" name="J. Bacteriol.">
        <title>Complete genome of acute rheumatic fever-associated serotype M5 Streptococcus pyogenes strain Manfredo.</title>
        <authorList>
            <person name="Holden M.T.G."/>
            <person name="Scott A."/>
            <person name="Cherevach I."/>
            <person name="Chillingworth T."/>
            <person name="Churcher C."/>
            <person name="Cronin A."/>
            <person name="Dowd L."/>
            <person name="Feltwell T."/>
            <person name="Hamlin N."/>
            <person name="Holroyd S."/>
            <person name="Jagels K."/>
            <person name="Moule S."/>
            <person name="Mungall K."/>
            <person name="Quail M.A."/>
            <person name="Price C."/>
            <person name="Rabbinowitsch E."/>
            <person name="Sharp S."/>
            <person name="Skelton J."/>
            <person name="Whitehead S."/>
            <person name="Barrell B.G."/>
            <person name="Kehoe M."/>
            <person name="Parkhill J."/>
        </authorList>
    </citation>
    <scope>NUCLEOTIDE SEQUENCE [LARGE SCALE GENOMIC DNA]</scope>
    <source>
        <strain>Manfredo</strain>
    </source>
</reference>
<protein>
    <recommendedName>
        <fullName evidence="1">ATP-dependent helicase/nuclease subunit A</fullName>
        <ecNumber evidence="1">3.1.-.-</ecNumber>
        <ecNumber evidence="1">5.6.2.4</ecNumber>
    </recommendedName>
    <alternativeName>
        <fullName evidence="1">ATP-dependent helicase/nuclease AddA</fullName>
    </alternativeName>
    <alternativeName>
        <fullName evidence="1">DNA 3'-5' helicase AddA</fullName>
    </alternativeName>
</protein>
<proteinExistence type="inferred from homology"/>
<gene>
    <name evidence="1" type="primary">addA</name>
    <name type="ordered locus">SpyM51212</name>
</gene>
<name>ADDA_STRPG</name>
<accession>A2RFA8</accession>